<feature type="chain" id="PRO_1000141610" description="Large ribosomal subunit protein uL2">
    <location>
        <begin position="1"/>
        <end position="273"/>
    </location>
</feature>
<feature type="region of interest" description="Disordered" evidence="2">
    <location>
        <begin position="28"/>
        <end position="53"/>
    </location>
</feature>
<feature type="region of interest" description="Disordered" evidence="2">
    <location>
        <begin position="221"/>
        <end position="273"/>
    </location>
</feature>
<feature type="compositionally biased region" description="Low complexity" evidence="2">
    <location>
        <begin position="39"/>
        <end position="48"/>
    </location>
</feature>
<protein>
    <recommendedName>
        <fullName evidence="1">Large ribosomal subunit protein uL2</fullName>
    </recommendedName>
    <alternativeName>
        <fullName evidence="3">50S ribosomal protein L2</fullName>
    </alternativeName>
</protein>
<reference key="1">
    <citation type="journal article" date="2011" name="J. Bacteriol.">
        <title>Comparative genomics of 28 Salmonella enterica isolates: evidence for CRISPR-mediated adaptive sublineage evolution.</title>
        <authorList>
            <person name="Fricke W.F."/>
            <person name="Mammel M.K."/>
            <person name="McDermott P.F."/>
            <person name="Tartera C."/>
            <person name="White D.G."/>
            <person name="Leclerc J.E."/>
            <person name="Ravel J."/>
            <person name="Cebula T.A."/>
        </authorList>
    </citation>
    <scope>NUCLEOTIDE SEQUENCE [LARGE SCALE GENOMIC DNA]</scope>
    <source>
        <strain>SL476</strain>
    </source>
</reference>
<keyword id="KW-0687">Ribonucleoprotein</keyword>
<keyword id="KW-0689">Ribosomal protein</keyword>
<keyword id="KW-0694">RNA-binding</keyword>
<keyword id="KW-0699">rRNA-binding</keyword>
<comment type="function">
    <text evidence="1">One of the primary rRNA binding proteins. Required for association of the 30S and 50S subunits to form the 70S ribosome, for tRNA binding and peptide bond formation. It has been suggested to have peptidyltransferase activity; this is somewhat controversial. Makes several contacts with the 16S rRNA in the 70S ribosome.</text>
</comment>
<comment type="subunit">
    <text evidence="1">Part of the 50S ribosomal subunit. Forms a bridge to the 30S subunit in the 70S ribosome.</text>
</comment>
<comment type="similarity">
    <text evidence="1">Belongs to the universal ribosomal protein uL2 family.</text>
</comment>
<evidence type="ECO:0000255" key="1">
    <source>
        <dbReference type="HAMAP-Rule" id="MF_01320"/>
    </source>
</evidence>
<evidence type="ECO:0000256" key="2">
    <source>
        <dbReference type="SAM" id="MobiDB-lite"/>
    </source>
</evidence>
<evidence type="ECO:0000305" key="3"/>
<sequence length="273" mass="29820">MAVVKCKPTSPGRRHVVKVVNPELHKGKPFAPLVEKNSKSGGRNNNGRITTRHIGGGHKQAYRIVDFKRNKDGIPAVVERLEYDPNRSANIALVLYKDGERRYILAPKGLKAGDQIQSGVDAAIKAGNTLPMRNIPVGSTVHNVEMKPGKGGQLARSAGTYVQIVARDGAYVTLRLRSGEMRKVEADCRATLGEVGNAEHMLRVLGKAGAARWRGVRPTVRGTAMNPVDHPHGGGEGRNFGKHPVTPWGVQTKGKKTRSNKRTDKFIVRRRSK</sequence>
<gene>
    <name evidence="1" type="primary">rplB</name>
    <name type="ordered locus">SeHA_C3741</name>
</gene>
<dbReference type="EMBL" id="CP001120">
    <property type="protein sequence ID" value="ACF69842.1"/>
    <property type="molecule type" value="Genomic_DNA"/>
</dbReference>
<dbReference type="RefSeq" id="WP_000301869.1">
    <property type="nucleotide sequence ID" value="NC_011083.1"/>
</dbReference>
<dbReference type="SMR" id="B4TKL2"/>
<dbReference type="GeneID" id="97393170"/>
<dbReference type="KEGG" id="seh:SeHA_C3741"/>
<dbReference type="HOGENOM" id="CLU_036235_2_1_6"/>
<dbReference type="Proteomes" id="UP000001866">
    <property type="component" value="Chromosome"/>
</dbReference>
<dbReference type="GO" id="GO:0005829">
    <property type="term" value="C:cytosol"/>
    <property type="evidence" value="ECO:0007669"/>
    <property type="project" value="UniProtKB-ARBA"/>
</dbReference>
<dbReference type="GO" id="GO:0015934">
    <property type="term" value="C:large ribosomal subunit"/>
    <property type="evidence" value="ECO:0007669"/>
    <property type="project" value="InterPro"/>
</dbReference>
<dbReference type="GO" id="GO:0019843">
    <property type="term" value="F:rRNA binding"/>
    <property type="evidence" value="ECO:0007669"/>
    <property type="project" value="UniProtKB-UniRule"/>
</dbReference>
<dbReference type="GO" id="GO:0003735">
    <property type="term" value="F:structural constituent of ribosome"/>
    <property type="evidence" value="ECO:0007669"/>
    <property type="project" value="InterPro"/>
</dbReference>
<dbReference type="GO" id="GO:0016740">
    <property type="term" value="F:transferase activity"/>
    <property type="evidence" value="ECO:0007669"/>
    <property type="project" value="InterPro"/>
</dbReference>
<dbReference type="GO" id="GO:0002181">
    <property type="term" value="P:cytoplasmic translation"/>
    <property type="evidence" value="ECO:0007669"/>
    <property type="project" value="TreeGrafter"/>
</dbReference>
<dbReference type="FunFam" id="2.30.30.30:FF:000001">
    <property type="entry name" value="50S ribosomal protein L2"/>
    <property type="match status" value="1"/>
</dbReference>
<dbReference type="FunFam" id="2.40.50.140:FF:000003">
    <property type="entry name" value="50S ribosomal protein L2"/>
    <property type="match status" value="1"/>
</dbReference>
<dbReference type="FunFam" id="4.10.950.10:FF:000001">
    <property type="entry name" value="50S ribosomal protein L2"/>
    <property type="match status" value="1"/>
</dbReference>
<dbReference type="Gene3D" id="2.30.30.30">
    <property type="match status" value="1"/>
</dbReference>
<dbReference type="Gene3D" id="2.40.50.140">
    <property type="entry name" value="Nucleic acid-binding proteins"/>
    <property type="match status" value="1"/>
</dbReference>
<dbReference type="Gene3D" id="4.10.950.10">
    <property type="entry name" value="Ribosomal protein L2, domain 3"/>
    <property type="match status" value="1"/>
</dbReference>
<dbReference type="HAMAP" id="MF_01320_B">
    <property type="entry name" value="Ribosomal_uL2_B"/>
    <property type="match status" value="1"/>
</dbReference>
<dbReference type="InterPro" id="IPR012340">
    <property type="entry name" value="NA-bd_OB-fold"/>
</dbReference>
<dbReference type="InterPro" id="IPR014722">
    <property type="entry name" value="Rib_uL2_dom2"/>
</dbReference>
<dbReference type="InterPro" id="IPR002171">
    <property type="entry name" value="Ribosomal_uL2"/>
</dbReference>
<dbReference type="InterPro" id="IPR005880">
    <property type="entry name" value="Ribosomal_uL2_bac/org-type"/>
</dbReference>
<dbReference type="InterPro" id="IPR022669">
    <property type="entry name" value="Ribosomal_uL2_C"/>
</dbReference>
<dbReference type="InterPro" id="IPR022671">
    <property type="entry name" value="Ribosomal_uL2_CS"/>
</dbReference>
<dbReference type="InterPro" id="IPR014726">
    <property type="entry name" value="Ribosomal_uL2_dom3"/>
</dbReference>
<dbReference type="InterPro" id="IPR022666">
    <property type="entry name" value="Ribosomal_uL2_RNA-bd_dom"/>
</dbReference>
<dbReference type="InterPro" id="IPR008991">
    <property type="entry name" value="Translation_prot_SH3-like_sf"/>
</dbReference>
<dbReference type="NCBIfam" id="TIGR01171">
    <property type="entry name" value="rplB_bact"/>
    <property type="match status" value="1"/>
</dbReference>
<dbReference type="PANTHER" id="PTHR13691:SF5">
    <property type="entry name" value="LARGE RIBOSOMAL SUBUNIT PROTEIN UL2M"/>
    <property type="match status" value="1"/>
</dbReference>
<dbReference type="PANTHER" id="PTHR13691">
    <property type="entry name" value="RIBOSOMAL PROTEIN L2"/>
    <property type="match status" value="1"/>
</dbReference>
<dbReference type="Pfam" id="PF00181">
    <property type="entry name" value="Ribosomal_L2"/>
    <property type="match status" value="1"/>
</dbReference>
<dbReference type="Pfam" id="PF03947">
    <property type="entry name" value="Ribosomal_L2_C"/>
    <property type="match status" value="1"/>
</dbReference>
<dbReference type="PIRSF" id="PIRSF002158">
    <property type="entry name" value="Ribosomal_L2"/>
    <property type="match status" value="1"/>
</dbReference>
<dbReference type="SMART" id="SM01383">
    <property type="entry name" value="Ribosomal_L2"/>
    <property type="match status" value="1"/>
</dbReference>
<dbReference type="SMART" id="SM01382">
    <property type="entry name" value="Ribosomal_L2_C"/>
    <property type="match status" value="1"/>
</dbReference>
<dbReference type="SUPFAM" id="SSF50249">
    <property type="entry name" value="Nucleic acid-binding proteins"/>
    <property type="match status" value="1"/>
</dbReference>
<dbReference type="SUPFAM" id="SSF50104">
    <property type="entry name" value="Translation proteins SH3-like domain"/>
    <property type="match status" value="1"/>
</dbReference>
<dbReference type="PROSITE" id="PS00467">
    <property type="entry name" value="RIBOSOMAL_L2"/>
    <property type="match status" value="1"/>
</dbReference>
<accession>B4TKL2</accession>
<name>RL2_SALHS</name>
<organism>
    <name type="scientific">Salmonella heidelberg (strain SL476)</name>
    <dbReference type="NCBI Taxonomy" id="454169"/>
    <lineage>
        <taxon>Bacteria</taxon>
        <taxon>Pseudomonadati</taxon>
        <taxon>Pseudomonadota</taxon>
        <taxon>Gammaproteobacteria</taxon>
        <taxon>Enterobacterales</taxon>
        <taxon>Enterobacteriaceae</taxon>
        <taxon>Salmonella</taxon>
    </lineage>
</organism>
<proteinExistence type="inferred from homology"/>